<gene>
    <name evidence="1" type="primary">glgC</name>
    <name type="ordered locus">BWG_3122</name>
</gene>
<keyword id="KW-0021">Allosteric enzyme</keyword>
<keyword id="KW-0067">ATP-binding</keyword>
<keyword id="KW-0119">Carbohydrate metabolism</keyword>
<keyword id="KW-0320">Glycogen biosynthesis</keyword>
<keyword id="KW-0321">Glycogen metabolism</keyword>
<keyword id="KW-0547">Nucleotide-binding</keyword>
<keyword id="KW-0548">Nucleotidyltransferase</keyword>
<keyword id="KW-0808">Transferase</keyword>
<name>GLGC_ECOBW</name>
<feature type="chain" id="PRO_1000212299" description="Glucose-1-phosphate adenylyltransferase">
    <location>
        <begin position="1"/>
        <end position="431"/>
    </location>
</feature>
<feature type="binding site" evidence="1">
    <location>
        <position position="39"/>
    </location>
    <ligand>
        <name>beta-D-fructose 1,6-bisphosphate</name>
        <dbReference type="ChEBI" id="CHEBI:32966"/>
    </ligand>
</feature>
<feature type="binding site" evidence="1">
    <location>
        <position position="40"/>
    </location>
    <ligand>
        <name>AMP</name>
        <dbReference type="ChEBI" id="CHEBI:456215"/>
    </ligand>
</feature>
<feature type="binding site" evidence="1">
    <location>
        <position position="46"/>
    </location>
    <ligand>
        <name>AMP</name>
        <dbReference type="ChEBI" id="CHEBI:456215"/>
    </ligand>
</feature>
<feature type="binding site" evidence="1">
    <location>
        <position position="52"/>
    </location>
    <ligand>
        <name>AMP</name>
        <dbReference type="ChEBI" id="CHEBI:456215"/>
    </ligand>
</feature>
<feature type="binding site" evidence="1">
    <location>
        <position position="114"/>
    </location>
    <ligand>
        <name>alpha-D-glucose 1-phosphate</name>
        <dbReference type="ChEBI" id="CHEBI:58601"/>
    </ligand>
</feature>
<feature type="binding site" evidence="1">
    <location>
        <position position="130"/>
    </location>
    <ligand>
        <name>AMP</name>
        <dbReference type="ChEBI" id="CHEBI:456215"/>
    </ligand>
</feature>
<feature type="binding site" evidence="1">
    <location>
        <position position="179"/>
    </location>
    <ligand>
        <name>alpha-D-glucose 1-phosphate</name>
        <dbReference type="ChEBI" id="CHEBI:58601"/>
    </ligand>
</feature>
<feature type="binding site" evidence="1">
    <location>
        <begin position="194"/>
        <end position="195"/>
    </location>
    <ligand>
        <name>alpha-D-glucose 1-phosphate</name>
        <dbReference type="ChEBI" id="CHEBI:58601"/>
    </ligand>
</feature>
<feature type="binding site" evidence="1">
    <location>
        <position position="212"/>
    </location>
    <ligand>
        <name>alpha-D-glucose 1-phosphate</name>
        <dbReference type="ChEBI" id="CHEBI:58601"/>
    </ligand>
</feature>
<feature type="binding site" evidence="1">
    <location>
        <position position="370"/>
    </location>
    <ligand>
        <name>AMP</name>
        <dbReference type="ChEBI" id="CHEBI:456215"/>
    </ligand>
</feature>
<feature type="binding site" evidence="1">
    <location>
        <position position="386"/>
    </location>
    <ligand>
        <name>AMP</name>
        <dbReference type="ChEBI" id="CHEBI:456215"/>
    </ligand>
</feature>
<feature type="binding site" evidence="1">
    <location>
        <begin position="419"/>
        <end position="423"/>
    </location>
    <ligand>
        <name>beta-D-fructose 1,6-bisphosphate</name>
        <dbReference type="ChEBI" id="CHEBI:32966"/>
    </ligand>
</feature>
<feature type="binding site" evidence="1">
    <location>
        <begin position="429"/>
        <end position="431"/>
    </location>
    <ligand>
        <name>beta-D-fructose 1,6-bisphosphate</name>
        <dbReference type="ChEBI" id="CHEBI:32966"/>
    </ligand>
</feature>
<feature type="site" description="Could play a key role in the communication between the regulatory and the substrate sites" evidence="1">
    <location>
        <position position="74"/>
    </location>
</feature>
<feature type="site" description="Could play a key role in the communication between the regulatory and the substrate sites" evidence="1">
    <location>
        <position position="113"/>
    </location>
</feature>
<reference key="1">
    <citation type="journal article" date="2009" name="J. Bacteriol.">
        <title>Genomic sequencing reveals regulatory mutations and recombinational events in the widely used MC4100 lineage of Escherichia coli K-12.</title>
        <authorList>
            <person name="Ferenci T."/>
            <person name="Zhou Z."/>
            <person name="Betteridge T."/>
            <person name="Ren Y."/>
            <person name="Liu Y."/>
            <person name="Feng L."/>
            <person name="Reeves P.R."/>
            <person name="Wang L."/>
        </authorList>
    </citation>
    <scope>NUCLEOTIDE SEQUENCE [LARGE SCALE GENOMIC DNA]</scope>
    <source>
        <strain>K12 / MC4100 / BW2952</strain>
    </source>
</reference>
<comment type="function">
    <text evidence="1">Involved in the biosynthesis of ADP-glucose, a building block required for the elongation reactions to produce glycogen. Catalyzes the reaction between ATP and alpha-D-glucose 1-phosphate (G1P) to produce pyrophosphate and ADP-Glc.</text>
</comment>
<comment type="catalytic activity">
    <reaction evidence="1">
        <text>alpha-D-glucose 1-phosphate + ATP + H(+) = ADP-alpha-D-glucose + diphosphate</text>
        <dbReference type="Rhea" id="RHEA:12120"/>
        <dbReference type="ChEBI" id="CHEBI:15378"/>
        <dbReference type="ChEBI" id="CHEBI:30616"/>
        <dbReference type="ChEBI" id="CHEBI:33019"/>
        <dbReference type="ChEBI" id="CHEBI:57498"/>
        <dbReference type="ChEBI" id="CHEBI:58601"/>
        <dbReference type="EC" id="2.7.7.27"/>
    </reaction>
</comment>
<comment type="activity regulation">
    <text evidence="1">Allosterically activated by fructose-1,6-bisphosphate (F16BP) and inhibited by AMP.</text>
</comment>
<comment type="pathway">
    <text evidence="1">Glycan biosynthesis; glycogen biosynthesis.</text>
</comment>
<comment type="subunit">
    <text evidence="1">Homotetramer.</text>
</comment>
<comment type="similarity">
    <text evidence="1">Belongs to the bacterial/plant glucose-1-phosphate adenylyltransferase family.</text>
</comment>
<dbReference type="EC" id="2.7.7.27" evidence="1"/>
<dbReference type="EMBL" id="CP001396">
    <property type="protein sequence ID" value="ACR63314.1"/>
    <property type="molecule type" value="Genomic_DNA"/>
</dbReference>
<dbReference type="RefSeq" id="WP_000253975.1">
    <property type="nucleotide sequence ID" value="NC_012759.1"/>
</dbReference>
<dbReference type="SMR" id="C4ZVY0"/>
<dbReference type="GeneID" id="93778559"/>
<dbReference type="KEGG" id="ebw:BWG_3122"/>
<dbReference type="HOGENOM" id="CLU_029499_14_1_6"/>
<dbReference type="UniPathway" id="UPA00164"/>
<dbReference type="GO" id="GO:0005524">
    <property type="term" value="F:ATP binding"/>
    <property type="evidence" value="ECO:0007669"/>
    <property type="project" value="UniProtKB-KW"/>
</dbReference>
<dbReference type="GO" id="GO:0008878">
    <property type="term" value="F:glucose-1-phosphate adenylyltransferase activity"/>
    <property type="evidence" value="ECO:0007669"/>
    <property type="project" value="UniProtKB-UniRule"/>
</dbReference>
<dbReference type="GO" id="GO:0005978">
    <property type="term" value="P:glycogen biosynthetic process"/>
    <property type="evidence" value="ECO:0007669"/>
    <property type="project" value="UniProtKB-UniRule"/>
</dbReference>
<dbReference type="CDD" id="cd02508">
    <property type="entry name" value="ADP_Glucose_PP"/>
    <property type="match status" value="1"/>
</dbReference>
<dbReference type="CDD" id="cd04651">
    <property type="entry name" value="LbH_G1P_AT_C"/>
    <property type="match status" value="1"/>
</dbReference>
<dbReference type="FunFam" id="2.160.10.10:FF:000006">
    <property type="entry name" value="Glucose-1-phosphate adenylyltransferase"/>
    <property type="match status" value="1"/>
</dbReference>
<dbReference type="FunFam" id="3.90.550.10:FF:000014">
    <property type="entry name" value="Glucose-1-phosphate adenylyltransferase"/>
    <property type="match status" value="1"/>
</dbReference>
<dbReference type="Gene3D" id="2.160.10.10">
    <property type="entry name" value="Hexapeptide repeat proteins"/>
    <property type="match status" value="1"/>
</dbReference>
<dbReference type="Gene3D" id="3.90.550.10">
    <property type="entry name" value="Spore Coat Polysaccharide Biosynthesis Protein SpsA, Chain A"/>
    <property type="match status" value="1"/>
</dbReference>
<dbReference type="HAMAP" id="MF_00624">
    <property type="entry name" value="GlgC"/>
    <property type="match status" value="1"/>
</dbReference>
<dbReference type="InterPro" id="IPR011831">
    <property type="entry name" value="ADP-Glc_PPase"/>
</dbReference>
<dbReference type="InterPro" id="IPR005836">
    <property type="entry name" value="ADP_Glu_pyroP_CS"/>
</dbReference>
<dbReference type="InterPro" id="IPR023049">
    <property type="entry name" value="GlgC_bac"/>
</dbReference>
<dbReference type="InterPro" id="IPR056818">
    <property type="entry name" value="GlmU/GlgC-like_hexapep"/>
</dbReference>
<dbReference type="InterPro" id="IPR005835">
    <property type="entry name" value="NTP_transferase_dom"/>
</dbReference>
<dbReference type="InterPro" id="IPR029044">
    <property type="entry name" value="Nucleotide-diphossugar_trans"/>
</dbReference>
<dbReference type="InterPro" id="IPR011004">
    <property type="entry name" value="Trimer_LpxA-like_sf"/>
</dbReference>
<dbReference type="NCBIfam" id="TIGR02091">
    <property type="entry name" value="glgC"/>
    <property type="match status" value="1"/>
</dbReference>
<dbReference type="NCBIfam" id="NF001947">
    <property type="entry name" value="PRK00725.1"/>
    <property type="match status" value="1"/>
</dbReference>
<dbReference type="NCBIfam" id="NF002023">
    <property type="entry name" value="PRK00844.1"/>
    <property type="match status" value="1"/>
</dbReference>
<dbReference type="PANTHER" id="PTHR43523:SF2">
    <property type="entry name" value="GLUCOSE-1-PHOSPHATE ADENYLYLTRANSFERASE"/>
    <property type="match status" value="1"/>
</dbReference>
<dbReference type="PANTHER" id="PTHR43523">
    <property type="entry name" value="GLUCOSE-1-PHOSPHATE ADENYLYLTRANSFERASE-RELATED"/>
    <property type="match status" value="1"/>
</dbReference>
<dbReference type="Pfam" id="PF24894">
    <property type="entry name" value="Hexapep_GlmU"/>
    <property type="match status" value="1"/>
</dbReference>
<dbReference type="Pfam" id="PF00483">
    <property type="entry name" value="NTP_transferase"/>
    <property type="match status" value="1"/>
</dbReference>
<dbReference type="SUPFAM" id="SSF53448">
    <property type="entry name" value="Nucleotide-diphospho-sugar transferases"/>
    <property type="match status" value="1"/>
</dbReference>
<dbReference type="SUPFAM" id="SSF51161">
    <property type="entry name" value="Trimeric LpxA-like enzymes"/>
    <property type="match status" value="1"/>
</dbReference>
<dbReference type="PROSITE" id="PS00808">
    <property type="entry name" value="ADP_GLC_PYROPHOSPH_1"/>
    <property type="match status" value="1"/>
</dbReference>
<dbReference type="PROSITE" id="PS00809">
    <property type="entry name" value="ADP_GLC_PYROPHOSPH_2"/>
    <property type="match status" value="1"/>
</dbReference>
<dbReference type="PROSITE" id="PS00810">
    <property type="entry name" value="ADP_GLC_PYROPHOSPH_3"/>
    <property type="match status" value="1"/>
</dbReference>
<protein>
    <recommendedName>
        <fullName evidence="1">Glucose-1-phosphate adenylyltransferase</fullName>
        <ecNumber evidence="1">2.7.7.27</ecNumber>
    </recommendedName>
    <alternativeName>
        <fullName evidence="1">ADP-glucose pyrophosphorylase</fullName>
        <shortName evidence="1">ADPGlc PPase</shortName>
    </alternativeName>
    <alternativeName>
        <fullName evidence="1">ADP-glucose synthase</fullName>
    </alternativeName>
</protein>
<proteinExistence type="inferred from homology"/>
<evidence type="ECO:0000255" key="1">
    <source>
        <dbReference type="HAMAP-Rule" id="MF_00624"/>
    </source>
</evidence>
<accession>C4ZVY0</accession>
<sequence>MVSLEKNDHLMLARQLPLKSVALILAGGRGTRLKDLTNKRAKPAVHFGGKFRIIDFALSNCINSGIRRMGVITQYQSHTLVQHIQRGWSFFNEEMNEFVDLLPAQQRMKGENWYRGTADAVTQNLDIIRRYKAEYVVILAGDHIYKQDYSRMLIDHVEKGARCTVACMPVPIEEASAFGVMAVDENDKIIEFVEKPANPPSMPNDPSKSLASMGIYVFDADYLYELLEEDDRDENSSHDFGKDLIPKITEAGLAYAHPFPLSCVQSDPDAEPYWRDVGTLEAYWKANLDLASVVPELDMYDRNWPIRTYNESLPPAKFVQDRSGSHGMTLNSLVSGGCVISGSVVVQSVLFSRVRVNSFCNIDSAVLLPEVWVGRSCRLRRCVIDRACVIPEGMVIGENAEEDARRFYRSEEGIVLVTREMLRKLGHKQER</sequence>
<organism>
    <name type="scientific">Escherichia coli (strain K12 / MC4100 / BW2952)</name>
    <dbReference type="NCBI Taxonomy" id="595496"/>
    <lineage>
        <taxon>Bacteria</taxon>
        <taxon>Pseudomonadati</taxon>
        <taxon>Pseudomonadota</taxon>
        <taxon>Gammaproteobacteria</taxon>
        <taxon>Enterobacterales</taxon>
        <taxon>Enterobacteriaceae</taxon>
        <taxon>Escherichia</taxon>
    </lineage>
</organism>